<comment type="subcellular location">
    <subcellularLocation>
        <location evidence="3">Vacuole membrane</location>
        <topology evidence="3">Multi-pass membrane protein</topology>
    </subcellularLocation>
</comment>
<proteinExistence type="evidence at protein level"/>
<name>YIG7_YEAST</name>
<dbReference type="EMBL" id="Z38060">
    <property type="protein sequence ID" value="CAA86156.1"/>
    <property type="molecule type" value="Genomic_DNA"/>
</dbReference>
<dbReference type="EMBL" id="AY692668">
    <property type="protein sequence ID" value="AAT92687.1"/>
    <property type="molecule type" value="Genomic_DNA"/>
</dbReference>
<dbReference type="EMBL" id="BK006942">
    <property type="protein sequence ID" value="DAA08483.1"/>
    <property type="molecule type" value="Genomic_DNA"/>
</dbReference>
<dbReference type="PIR" id="S48412">
    <property type="entry name" value="S48412"/>
</dbReference>
<dbReference type="RefSeq" id="NP_012197.1">
    <property type="nucleotide sequence ID" value="NM_001179417.1"/>
</dbReference>
<dbReference type="BioGRID" id="34925">
    <property type="interactions" value="37"/>
</dbReference>
<dbReference type="FunCoup" id="P40514">
    <property type="interactions" value="29"/>
</dbReference>
<dbReference type="IntAct" id="P40514">
    <property type="interactions" value="1"/>
</dbReference>
<dbReference type="MINT" id="P40514"/>
<dbReference type="STRING" id="4932.YIL067C"/>
<dbReference type="PaxDb" id="4932-YIL067C"/>
<dbReference type="PeptideAtlas" id="P40514"/>
<dbReference type="EnsemblFungi" id="YIL067C_mRNA">
    <property type="protein sequence ID" value="YIL067C"/>
    <property type="gene ID" value="YIL067C"/>
</dbReference>
<dbReference type="GeneID" id="854743"/>
<dbReference type="KEGG" id="sce:YIL067C"/>
<dbReference type="AGR" id="SGD:S000001329"/>
<dbReference type="SGD" id="S000001329">
    <property type="gene designation" value="YIL067C"/>
</dbReference>
<dbReference type="VEuPathDB" id="FungiDB:YIL067C"/>
<dbReference type="eggNOG" id="ENOG502QUEX">
    <property type="taxonomic scope" value="Eukaryota"/>
</dbReference>
<dbReference type="HOGENOM" id="CLU_011125_2_0_1"/>
<dbReference type="InParanoid" id="P40514"/>
<dbReference type="OMA" id="HWDKTVL"/>
<dbReference type="OrthoDB" id="441660at2759"/>
<dbReference type="BioCyc" id="YEAST:G3O-31334-MONOMER"/>
<dbReference type="BioGRID-ORCS" id="854743">
    <property type="hits" value="2 hits in 10 CRISPR screens"/>
</dbReference>
<dbReference type="PRO" id="PR:P40514"/>
<dbReference type="Proteomes" id="UP000002311">
    <property type="component" value="Chromosome IX"/>
</dbReference>
<dbReference type="RNAct" id="P40514">
    <property type="molecule type" value="protein"/>
</dbReference>
<dbReference type="GO" id="GO:0000324">
    <property type="term" value="C:fungal-type vacuole"/>
    <property type="evidence" value="ECO:0007005"/>
    <property type="project" value="SGD"/>
</dbReference>
<dbReference type="GO" id="GO:0005774">
    <property type="term" value="C:vacuolar membrane"/>
    <property type="evidence" value="ECO:0007669"/>
    <property type="project" value="UniProtKB-SubCell"/>
</dbReference>
<dbReference type="FunFam" id="2.170.130.20:FF:000008">
    <property type="entry name" value="YIL067C-like protein"/>
    <property type="match status" value="1"/>
</dbReference>
<dbReference type="Gene3D" id="2.170.130.20">
    <property type="entry name" value="LCCL-like domain"/>
    <property type="match status" value="1"/>
</dbReference>
<dbReference type="InterPro" id="IPR051957">
    <property type="entry name" value="CRISP-LCCL_domain"/>
</dbReference>
<dbReference type="InterPro" id="IPR004043">
    <property type="entry name" value="LCCL"/>
</dbReference>
<dbReference type="InterPro" id="IPR036609">
    <property type="entry name" value="LCCL_sf"/>
</dbReference>
<dbReference type="PANTHER" id="PTHR31331:SF1">
    <property type="entry name" value="CYSTEINE RICH SECRETORY PROTEIN LCCL DOMAIN CONTAINING 2"/>
    <property type="match status" value="1"/>
</dbReference>
<dbReference type="PANTHER" id="PTHR31331">
    <property type="entry name" value="LCCL DOMAIN PROTEIN (AFU_ORTHOLOGUE AFUA_5G08630)"/>
    <property type="match status" value="1"/>
</dbReference>
<dbReference type="Pfam" id="PF03815">
    <property type="entry name" value="LCCL"/>
    <property type="match status" value="1"/>
</dbReference>
<dbReference type="SUPFAM" id="SSF69848">
    <property type="entry name" value="LCCL domain"/>
    <property type="match status" value="1"/>
</dbReference>
<keyword id="KW-0472">Membrane</keyword>
<keyword id="KW-1185">Reference proteome</keyword>
<keyword id="KW-0812">Transmembrane</keyword>
<keyword id="KW-1133">Transmembrane helix</keyword>
<keyword id="KW-0926">Vacuole</keyword>
<organism>
    <name type="scientific">Saccharomyces cerevisiae (strain ATCC 204508 / S288c)</name>
    <name type="common">Baker's yeast</name>
    <dbReference type="NCBI Taxonomy" id="559292"/>
    <lineage>
        <taxon>Eukaryota</taxon>
        <taxon>Fungi</taxon>
        <taxon>Dikarya</taxon>
        <taxon>Ascomycota</taxon>
        <taxon>Saccharomycotina</taxon>
        <taxon>Saccharomycetes</taxon>
        <taxon>Saccharomycetales</taxon>
        <taxon>Saccharomycetaceae</taxon>
        <taxon>Saccharomyces</taxon>
    </lineage>
</organism>
<accession>P40514</accession>
<accession>D6VVL7</accession>
<accession>Q6B2R2</accession>
<evidence type="ECO:0000255" key="1"/>
<evidence type="ECO:0000256" key="2">
    <source>
        <dbReference type="SAM" id="MobiDB-lite"/>
    </source>
</evidence>
<evidence type="ECO:0000305" key="3"/>
<gene>
    <name type="ordered locus">YIL067C</name>
</gene>
<feature type="chain" id="PRO_0000202981" description="Uncharacterized protein YIL067C">
    <location>
        <begin position="1"/>
        <end position="678"/>
    </location>
</feature>
<feature type="transmembrane region" description="Helical" evidence="1">
    <location>
        <begin position="119"/>
        <end position="139"/>
    </location>
</feature>
<feature type="transmembrane region" description="Helical" evidence="1">
    <location>
        <begin position="245"/>
        <end position="265"/>
    </location>
</feature>
<feature type="transmembrane region" description="Helical" evidence="1">
    <location>
        <begin position="317"/>
        <end position="337"/>
    </location>
</feature>
<feature type="transmembrane region" description="Helical" evidence="1">
    <location>
        <begin position="340"/>
        <end position="360"/>
    </location>
</feature>
<feature type="transmembrane region" description="Helical" evidence="1">
    <location>
        <begin position="371"/>
        <end position="391"/>
    </location>
</feature>
<feature type="transmembrane region" description="Helical" evidence="1">
    <location>
        <begin position="405"/>
        <end position="425"/>
    </location>
</feature>
<feature type="transmembrane region" description="Helical" evidence="1">
    <location>
        <begin position="443"/>
        <end position="463"/>
    </location>
</feature>
<feature type="transmembrane region" description="Helical" evidence="1">
    <location>
        <begin position="475"/>
        <end position="495"/>
    </location>
</feature>
<feature type="transmembrane region" description="Helical" evidence="1">
    <location>
        <begin position="519"/>
        <end position="539"/>
    </location>
</feature>
<feature type="region of interest" description="Disordered" evidence="2">
    <location>
        <begin position="1"/>
        <end position="26"/>
    </location>
</feature>
<feature type="sequence conflict" description="In Ref. 3; AAT92687." evidence="3" ref="3">
    <original>A</original>
    <variation>T</variation>
    <location>
        <position position="644"/>
    </location>
</feature>
<protein>
    <recommendedName>
        <fullName>Uncharacterized protein YIL067C</fullName>
    </recommendedName>
</protein>
<sequence length="678" mass="75482">MGVHFDDNANTTWEATDPGVSSDCDGQHRVTESIQLQNFSNTDMESMLDEEGRENSKSKWLLLKRKHPIQKFIERVWNGPVEPSDEPPSFPKRWGWLKKIDDFPQTTFKTKIPSKLIRLLLLIVYCCFWMRIFYSLIYPYLIKPPYFHPNDGSEKIPILSLSCNSYLNWEGTNNECGLNAKNCGPLDNKEYMIRCPALCDRGGWTYSAIAVGNRRVKYTGYEIGGGALFSEEDPMVVSYPYRSDSFPCASAVHAGVISPFYGGCTKVSMQGAQNSFPSKKGMYNTGFSVAFNSFFPGSYSFRDIQGGILSGCYDPRAAVVALNMLFGLPIFYLYDSIYGYWINTIVGYWTLVLSLDPPLLTDAHDPASVYELFSVGFQRLLPLCFVLYVVWKSAVKRTLENGSPIAKVILWYPTFWLGISNNVTFDRLPVDRLTTTDLKEQAGALTAVGSIAATILTCAVIQAYSLWKSGRFKKYFKIYICFIGGLIALGSLPGLNLRIHHYILGSILVPGCATRGSSAYLFQGILVGLILSGVARWDFASIVETDTALLRGEAGASLKPPILDFNDDQNHSLSWHLNATDPVIDQIGNIDGFSLLLNDVEVYVGKNETVSIDVLRMENPALAQMMDDALDASNGTIDLYLRVARASVRSPTNRGDYTNAGVLQWPNGMWQKPEPGVS</sequence>
<reference key="1">
    <citation type="journal article" date="1997" name="Nature">
        <title>The nucleotide sequence of Saccharomyces cerevisiae chromosome IX.</title>
        <authorList>
            <person name="Churcher C.M."/>
            <person name="Bowman S."/>
            <person name="Badcock K."/>
            <person name="Bankier A.T."/>
            <person name="Brown D."/>
            <person name="Chillingworth T."/>
            <person name="Connor R."/>
            <person name="Devlin K."/>
            <person name="Gentles S."/>
            <person name="Hamlin N."/>
            <person name="Harris D.E."/>
            <person name="Horsnell T."/>
            <person name="Hunt S."/>
            <person name="Jagels K."/>
            <person name="Jones M."/>
            <person name="Lye G."/>
            <person name="Moule S."/>
            <person name="Odell C."/>
            <person name="Pearson D."/>
            <person name="Rajandream M.A."/>
            <person name="Rice P."/>
            <person name="Rowley N."/>
            <person name="Skelton J."/>
            <person name="Smith V."/>
            <person name="Walsh S.V."/>
            <person name="Whitehead S."/>
            <person name="Barrell B.G."/>
        </authorList>
    </citation>
    <scope>NUCLEOTIDE SEQUENCE [LARGE SCALE GENOMIC DNA]</scope>
    <source>
        <strain>ATCC 204508 / S288c</strain>
    </source>
</reference>
<reference key="2">
    <citation type="journal article" date="2014" name="G3 (Bethesda)">
        <title>The reference genome sequence of Saccharomyces cerevisiae: Then and now.</title>
        <authorList>
            <person name="Engel S.R."/>
            <person name="Dietrich F.S."/>
            <person name="Fisk D.G."/>
            <person name="Binkley G."/>
            <person name="Balakrishnan R."/>
            <person name="Costanzo M.C."/>
            <person name="Dwight S.S."/>
            <person name="Hitz B.C."/>
            <person name="Karra K."/>
            <person name="Nash R.S."/>
            <person name="Weng S."/>
            <person name="Wong E.D."/>
            <person name="Lloyd P."/>
            <person name="Skrzypek M.S."/>
            <person name="Miyasato S.R."/>
            <person name="Simison M."/>
            <person name="Cherry J.M."/>
        </authorList>
    </citation>
    <scope>GENOME REANNOTATION</scope>
    <source>
        <strain>ATCC 204508 / S288c</strain>
    </source>
</reference>
<reference key="3">
    <citation type="journal article" date="2007" name="Genome Res.">
        <title>Approaching a complete repository of sequence-verified protein-encoding clones for Saccharomyces cerevisiae.</title>
        <authorList>
            <person name="Hu Y."/>
            <person name="Rolfs A."/>
            <person name="Bhullar B."/>
            <person name="Murthy T.V.S."/>
            <person name="Zhu C."/>
            <person name="Berger M.F."/>
            <person name="Camargo A.A."/>
            <person name="Kelley F."/>
            <person name="McCarron S."/>
            <person name="Jepson D."/>
            <person name="Richardson A."/>
            <person name="Raphael J."/>
            <person name="Moreira D."/>
            <person name="Taycher E."/>
            <person name="Zuo D."/>
            <person name="Mohr S."/>
            <person name="Kane M.F."/>
            <person name="Williamson J."/>
            <person name="Simpson A.J.G."/>
            <person name="Bulyk M.L."/>
            <person name="Harlow E."/>
            <person name="Marsischky G."/>
            <person name="Kolodner R.D."/>
            <person name="LaBaer J."/>
        </authorList>
    </citation>
    <scope>NUCLEOTIDE SEQUENCE [GENOMIC DNA]</scope>
    <source>
        <strain>ATCC 204508 / S288c</strain>
    </source>
</reference>
<reference key="4">
    <citation type="journal article" date="2003" name="Nature">
        <title>Global analysis of protein localization in budding yeast.</title>
        <authorList>
            <person name="Huh W.-K."/>
            <person name="Falvo J.V."/>
            <person name="Gerke L.C."/>
            <person name="Carroll A.S."/>
            <person name="Howson R.W."/>
            <person name="Weissman J.S."/>
            <person name="O'Shea E.K."/>
        </authorList>
    </citation>
    <scope>SUBCELLULAR LOCATION [LARGE SCALE ANALYSIS]</scope>
</reference>